<organism>
    <name type="scientific">Chlamydia caviae (strain ATCC VR-813 / DSM 19441 / 03DC25 / GPIC)</name>
    <name type="common">Chlamydophila caviae</name>
    <dbReference type="NCBI Taxonomy" id="227941"/>
    <lineage>
        <taxon>Bacteria</taxon>
        <taxon>Pseudomonadati</taxon>
        <taxon>Chlamydiota</taxon>
        <taxon>Chlamydiia</taxon>
        <taxon>Chlamydiales</taxon>
        <taxon>Chlamydiaceae</taxon>
        <taxon>Chlamydia/Chlamydophila group</taxon>
        <taxon>Chlamydia</taxon>
    </lineage>
</organism>
<accession>Q824A6</accession>
<feature type="chain" id="PRO_0000139436" description="UPF0235 protein CCA_00247">
    <location>
        <begin position="1"/>
        <end position="92"/>
    </location>
</feature>
<protein>
    <recommendedName>
        <fullName evidence="1">UPF0235 protein CCA_00247</fullName>
    </recommendedName>
</protein>
<gene>
    <name type="ordered locus">CCA_00247</name>
</gene>
<proteinExistence type="inferred from homology"/>
<sequence>MNEEYWILEVKVTPKSRENKIVGFEGEVLKIRVTEAPEKGKANEAVIALLAKTLSLPKRDVTLISGETSRKKRLLLPKSTESIISHWREHGL</sequence>
<comment type="similarity">
    <text evidence="1">Belongs to the UPF0235 family.</text>
</comment>
<dbReference type="EMBL" id="AE015925">
    <property type="protein sequence ID" value="AAP04998.1"/>
    <property type="molecule type" value="Genomic_DNA"/>
</dbReference>
<dbReference type="RefSeq" id="WP_011006216.1">
    <property type="nucleotide sequence ID" value="NC_003361.3"/>
</dbReference>
<dbReference type="SMR" id="Q824A6"/>
<dbReference type="STRING" id="227941.CCA_00247"/>
<dbReference type="KEGG" id="cca:CCA_00247"/>
<dbReference type="eggNOG" id="COG1872">
    <property type="taxonomic scope" value="Bacteria"/>
</dbReference>
<dbReference type="HOGENOM" id="CLU_130694_6_2_0"/>
<dbReference type="OrthoDB" id="9800587at2"/>
<dbReference type="Proteomes" id="UP000002193">
    <property type="component" value="Chromosome"/>
</dbReference>
<dbReference type="GO" id="GO:0005737">
    <property type="term" value="C:cytoplasm"/>
    <property type="evidence" value="ECO:0007669"/>
    <property type="project" value="TreeGrafter"/>
</dbReference>
<dbReference type="Gene3D" id="3.30.1200.10">
    <property type="entry name" value="YggU-like"/>
    <property type="match status" value="1"/>
</dbReference>
<dbReference type="HAMAP" id="MF_00634">
    <property type="entry name" value="UPF0235"/>
    <property type="match status" value="1"/>
</dbReference>
<dbReference type="InterPro" id="IPR003746">
    <property type="entry name" value="DUF167"/>
</dbReference>
<dbReference type="InterPro" id="IPR036591">
    <property type="entry name" value="YggU-like_sf"/>
</dbReference>
<dbReference type="NCBIfam" id="TIGR00251">
    <property type="entry name" value="DUF167 family protein"/>
    <property type="match status" value="1"/>
</dbReference>
<dbReference type="NCBIfam" id="NF001887">
    <property type="entry name" value="PRK00647.1"/>
    <property type="match status" value="1"/>
</dbReference>
<dbReference type="PANTHER" id="PTHR13420">
    <property type="entry name" value="UPF0235 PROTEIN C15ORF40"/>
    <property type="match status" value="1"/>
</dbReference>
<dbReference type="PANTHER" id="PTHR13420:SF7">
    <property type="entry name" value="UPF0235 PROTEIN C15ORF40"/>
    <property type="match status" value="1"/>
</dbReference>
<dbReference type="Pfam" id="PF02594">
    <property type="entry name" value="DUF167"/>
    <property type="match status" value="1"/>
</dbReference>
<dbReference type="SMART" id="SM01152">
    <property type="entry name" value="DUF167"/>
    <property type="match status" value="1"/>
</dbReference>
<dbReference type="SUPFAM" id="SSF69786">
    <property type="entry name" value="YggU-like"/>
    <property type="match status" value="1"/>
</dbReference>
<reference key="1">
    <citation type="journal article" date="2003" name="Nucleic Acids Res.">
        <title>Genome sequence of Chlamydophila caviae (Chlamydia psittaci GPIC): examining the role of niche-specific genes in the evolution of the Chlamydiaceae.</title>
        <authorList>
            <person name="Read T.D."/>
            <person name="Myers G.S.A."/>
            <person name="Brunham R.C."/>
            <person name="Nelson W.C."/>
            <person name="Paulsen I.T."/>
            <person name="Heidelberg J.F."/>
            <person name="Holtzapple E.K."/>
            <person name="Khouri H.M."/>
            <person name="Federova N.B."/>
            <person name="Carty H.A."/>
            <person name="Umayam L.A."/>
            <person name="Haft D.H."/>
            <person name="Peterson J.D."/>
            <person name="Beanan M.J."/>
            <person name="White O."/>
            <person name="Salzberg S.L."/>
            <person name="Hsia R.-C."/>
            <person name="McClarty G."/>
            <person name="Rank R.G."/>
            <person name="Bavoil P.M."/>
            <person name="Fraser C.M."/>
        </authorList>
    </citation>
    <scope>NUCLEOTIDE SEQUENCE [LARGE SCALE GENOMIC DNA]</scope>
    <source>
        <strain>ATCC VR-813 / DSM 19441 / 03DC25 / GPIC</strain>
    </source>
</reference>
<name>Y247_CHLCV</name>
<evidence type="ECO:0000255" key="1">
    <source>
        <dbReference type="HAMAP-Rule" id="MF_00634"/>
    </source>
</evidence>